<accession>Q8GWA7</accession>
<accession>Q9LM68</accession>
<gene>
    <name evidence="6" type="primary">MCD1</name>
    <name evidence="10" type="ordered locus">At1g20830</name>
    <name evidence="11" type="ORF">F2D10.35</name>
</gene>
<evidence type="ECO:0000255" key="1"/>
<evidence type="ECO:0000256" key="2">
    <source>
        <dbReference type="SAM" id="MobiDB-lite"/>
    </source>
</evidence>
<evidence type="ECO:0000269" key="3">
    <source>
    </source>
</evidence>
<evidence type="ECO:0000269" key="4">
    <source>
    </source>
</evidence>
<evidence type="ECO:0000269" key="5">
    <source>
    </source>
</evidence>
<evidence type="ECO:0000303" key="6">
    <source>
    </source>
</evidence>
<evidence type="ECO:0000305" key="7"/>
<evidence type="ECO:0000305" key="8">
    <source>
    </source>
</evidence>
<evidence type="ECO:0000305" key="9">
    <source>
    </source>
</evidence>
<evidence type="ECO:0000312" key="10">
    <source>
        <dbReference type="Araport" id="AT1G20830"/>
    </source>
</evidence>
<evidence type="ECO:0000312" key="11">
    <source>
        <dbReference type="EMBL" id="AAF80625.1"/>
    </source>
</evidence>
<protein>
    <recommendedName>
        <fullName evidence="6">Protein MULTIPLE CHLOROPLAST DIVISION SITE 1</fullName>
    </recommendedName>
</protein>
<sequence>MASIDSLQFHSLCNLQSSIGRAKLQNPSSLVIFRRRPVNLNWVQFETKGSFVCKAIGDSSTPDEDIQNTQSDDNVVVVTATTQSDIPHDSEYSISRFRSMVTTLPPVVFLMKKCSVNSIWIGVCITATVLVAAIRAYVVRKSRDNQRAGSVADLVRRGQLRSGDRRGISKSLNYEDPFNNPFVKLDKGSSTVEMCGKVYRLAPVTLTEKEQTIHQKRRSRAYQWKRPTIFLKEGDSIPPDVDPDTVRWIPANHPFATTVSDIDQDLAQNNVYQKQGVPFRIRAEHEAMQKKLEALQNEEKLNNLSIDSQNARDFQRPYKFSAKLEGENIQKNSQENHTGNSSSEETHKS</sequence>
<comment type="function">
    <text evidence="4 5">Required for chloroplast division (PubMed:23936263, PubMed:29967285). Together with MIND1 and ARC3, regulates FtsZ ring positioning in chloroplasts in an ARC6-dependent manner (PubMed:29967285). Determines the site of chloroplast division in concert with MIND1 (PubMed:29967285). Not directly involved in ring formation, but required for MIND1 and MINE1 localization to regulate FtsZ ring formation during plastidial constriction (PubMed:29967285).</text>
</comment>
<comment type="subunit">
    <text evidence="3 5">Interacts with MIND1 (PubMed:19135368). Interacts with ARC6 in the chloroplast stroma and binds to FtsZ2-1 in an ARC6-dependent manner (PubMed:29967285).</text>
</comment>
<comment type="subcellular location">
    <subcellularLocation>
        <location evidence="3">Plastid</location>
        <location evidence="3">Chloroplast inner membrane</location>
        <topology evidence="1">Single-pass membrane protein</topology>
    </subcellularLocation>
    <text evidence="3 5">Localizes at the chloroplast to a ring structure at the constriction site and on the punctate structures of the envelope membrane throughout the chloroplast division.</text>
</comment>
<comment type="disruption phenotype">
    <text evidence="3 4 5">Heterogeneous population of chloroplasts with variable size and multiple division sites (PubMed:19135368, PubMed:23936263). Abnormal subplastidial localization of the key plastid division proteins FTSZ1 forming multiple rings (PubMed:29967285). Normal shape and number of etioplasts in cotyledons (PubMed:23936263). The double mutant mcd1 arc6 exhibits similar chloroplast defect than the single mutant arc6, including the abnormal localization of FTSZ1 to short filaments and dots within chloroplasts (PubMed:29967285).</text>
</comment>
<comment type="sequence caution" evidence="7">
    <conflict type="erroneous gene model prediction">
        <sequence resource="EMBL-CDS" id="AAF80625"/>
    </conflict>
</comment>
<feature type="transit peptide" description="Chloroplast" evidence="1">
    <location>
        <begin position="1"/>
        <end position="52"/>
    </location>
</feature>
<feature type="chain" id="PRO_0000435851" description="Protein MULTIPLE CHLOROPLAST DIVISION SITE 1">
    <location>
        <begin position="53"/>
        <end position="349"/>
    </location>
</feature>
<feature type="topological domain" description="Chloroplast intermembrane" evidence="8 9">
    <location>
        <begin position="53"/>
        <end position="116"/>
    </location>
</feature>
<feature type="transmembrane region" description="Helical" evidence="1">
    <location>
        <begin position="117"/>
        <end position="139"/>
    </location>
</feature>
<feature type="topological domain" description="Stromal" evidence="8 9">
    <location>
        <begin position="140"/>
        <end position="349"/>
    </location>
</feature>
<feature type="region of interest" description="Disordered" evidence="2">
    <location>
        <begin position="315"/>
        <end position="349"/>
    </location>
</feature>
<feature type="compositionally biased region" description="Polar residues" evidence="2">
    <location>
        <begin position="329"/>
        <end position="343"/>
    </location>
</feature>
<proteinExistence type="evidence at protein level"/>
<organism>
    <name type="scientific">Arabidopsis thaliana</name>
    <name type="common">Mouse-ear cress</name>
    <dbReference type="NCBI Taxonomy" id="3702"/>
    <lineage>
        <taxon>Eukaryota</taxon>
        <taxon>Viridiplantae</taxon>
        <taxon>Streptophyta</taxon>
        <taxon>Embryophyta</taxon>
        <taxon>Tracheophyta</taxon>
        <taxon>Spermatophyta</taxon>
        <taxon>Magnoliopsida</taxon>
        <taxon>eudicotyledons</taxon>
        <taxon>Gunneridae</taxon>
        <taxon>Pentapetalae</taxon>
        <taxon>rosids</taxon>
        <taxon>malvids</taxon>
        <taxon>Brassicales</taxon>
        <taxon>Brassicaceae</taxon>
        <taxon>Camelineae</taxon>
        <taxon>Arabidopsis</taxon>
    </lineage>
</organism>
<dbReference type="EMBL" id="AC069251">
    <property type="protein sequence ID" value="AAF80625.1"/>
    <property type="status" value="ALT_SEQ"/>
    <property type="molecule type" value="Genomic_DNA"/>
</dbReference>
<dbReference type="EMBL" id="CP002684">
    <property type="protein sequence ID" value="AEE30029.1"/>
    <property type="molecule type" value="Genomic_DNA"/>
</dbReference>
<dbReference type="EMBL" id="AK118972">
    <property type="protein sequence ID" value="BAC43549.1"/>
    <property type="molecule type" value="mRNA"/>
</dbReference>
<dbReference type="EMBL" id="BT006034">
    <property type="protein sequence ID" value="AAP04021.1"/>
    <property type="molecule type" value="mRNA"/>
</dbReference>
<dbReference type="PIR" id="G86340">
    <property type="entry name" value="G86340"/>
</dbReference>
<dbReference type="RefSeq" id="NP_173507.1">
    <property type="nucleotide sequence ID" value="NM_101936.3"/>
</dbReference>
<dbReference type="SMR" id="Q8GWA7"/>
<dbReference type="FunCoup" id="Q8GWA7">
    <property type="interactions" value="1723"/>
</dbReference>
<dbReference type="STRING" id="3702.Q8GWA7"/>
<dbReference type="PaxDb" id="3702-AT1G20830.1"/>
<dbReference type="ProteomicsDB" id="238284"/>
<dbReference type="EnsemblPlants" id="AT1G20830.1">
    <property type="protein sequence ID" value="AT1G20830.1"/>
    <property type="gene ID" value="AT1G20830"/>
</dbReference>
<dbReference type="GeneID" id="838675"/>
<dbReference type="Gramene" id="AT1G20830.1">
    <property type="protein sequence ID" value="AT1G20830.1"/>
    <property type="gene ID" value="AT1G20830"/>
</dbReference>
<dbReference type="KEGG" id="ath:AT1G20830"/>
<dbReference type="Araport" id="AT1G20830"/>
<dbReference type="TAIR" id="AT1G20830">
    <property type="gene designation" value="MCD1"/>
</dbReference>
<dbReference type="eggNOG" id="ENOG502QVE8">
    <property type="taxonomic scope" value="Eukaryota"/>
</dbReference>
<dbReference type="HOGENOM" id="CLU_063546_0_0_1"/>
<dbReference type="InParanoid" id="Q8GWA7"/>
<dbReference type="OrthoDB" id="1927797at2759"/>
<dbReference type="PhylomeDB" id="Q8GWA7"/>
<dbReference type="PRO" id="PR:Q8GWA7"/>
<dbReference type="Proteomes" id="UP000006548">
    <property type="component" value="Chromosome 1"/>
</dbReference>
<dbReference type="ExpressionAtlas" id="Q8GWA7">
    <property type="expression patterns" value="baseline and differential"/>
</dbReference>
<dbReference type="GO" id="GO:0009941">
    <property type="term" value="C:chloroplast envelope"/>
    <property type="evidence" value="ECO:0000314"/>
    <property type="project" value="TAIR"/>
</dbReference>
<dbReference type="GO" id="GO:0009706">
    <property type="term" value="C:chloroplast inner membrane"/>
    <property type="evidence" value="ECO:0000314"/>
    <property type="project" value="UniProtKB"/>
</dbReference>
<dbReference type="GO" id="GO:0031972">
    <property type="term" value="C:chloroplast intermembrane space"/>
    <property type="evidence" value="ECO:0000314"/>
    <property type="project" value="UniProtKB"/>
</dbReference>
<dbReference type="GO" id="GO:0009570">
    <property type="term" value="C:chloroplast stroma"/>
    <property type="evidence" value="ECO:0000314"/>
    <property type="project" value="UniProtKB"/>
</dbReference>
<dbReference type="GO" id="GO:0005634">
    <property type="term" value="C:nucleus"/>
    <property type="evidence" value="ECO:0007005"/>
    <property type="project" value="TAIR"/>
</dbReference>
<dbReference type="GO" id="GO:0010020">
    <property type="term" value="P:chloroplast fission"/>
    <property type="evidence" value="ECO:0000315"/>
    <property type="project" value="TAIR"/>
</dbReference>
<dbReference type="InterPro" id="IPR034572">
    <property type="entry name" value="MCD1"/>
</dbReference>
<dbReference type="PANTHER" id="PTHR36317">
    <property type="entry name" value="PROTEIN MULTIPLE CHLOROPLAST DIVISION SITE 1"/>
    <property type="match status" value="1"/>
</dbReference>
<dbReference type="PANTHER" id="PTHR36317:SF1">
    <property type="entry name" value="PROTEIN MULTIPLE CHLOROPLAST DIVISION SITE 1"/>
    <property type="match status" value="1"/>
</dbReference>
<reference key="1">
    <citation type="journal article" date="2000" name="Nature">
        <title>Sequence and analysis of chromosome 1 of the plant Arabidopsis thaliana.</title>
        <authorList>
            <person name="Theologis A."/>
            <person name="Ecker J.R."/>
            <person name="Palm C.J."/>
            <person name="Federspiel N.A."/>
            <person name="Kaul S."/>
            <person name="White O."/>
            <person name="Alonso J."/>
            <person name="Altafi H."/>
            <person name="Araujo R."/>
            <person name="Bowman C.L."/>
            <person name="Brooks S.Y."/>
            <person name="Buehler E."/>
            <person name="Chan A."/>
            <person name="Chao Q."/>
            <person name="Chen H."/>
            <person name="Cheuk R.F."/>
            <person name="Chin C.W."/>
            <person name="Chung M.K."/>
            <person name="Conn L."/>
            <person name="Conway A.B."/>
            <person name="Conway A.R."/>
            <person name="Creasy T.H."/>
            <person name="Dewar K."/>
            <person name="Dunn P."/>
            <person name="Etgu P."/>
            <person name="Feldblyum T.V."/>
            <person name="Feng J.-D."/>
            <person name="Fong B."/>
            <person name="Fujii C.Y."/>
            <person name="Gill J.E."/>
            <person name="Goldsmith A.D."/>
            <person name="Haas B."/>
            <person name="Hansen N.F."/>
            <person name="Hughes B."/>
            <person name="Huizar L."/>
            <person name="Hunter J.L."/>
            <person name="Jenkins J."/>
            <person name="Johnson-Hopson C."/>
            <person name="Khan S."/>
            <person name="Khaykin E."/>
            <person name="Kim C.J."/>
            <person name="Koo H.L."/>
            <person name="Kremenetskaia I."/>
            <person name="Kurtz D.B."/>
            <person name="Kwan A."/>
            <person name="Lam B."/>
            <person name="Langin-Hooper S."/>
            <person name="Lee A."/>
            <person name="Lee J.M."/>
            <person name="Lenz C.A."/>
            <person name="Li J.H."/>
            <person name="Li Y.-P."/>
            <person name="Lin X."/>
            <person name="Liu S.X."/>
            <person name="Liu Z.A."/>
            <person name="Luros J.S."/>
            <person name="Maiti R."/>
            <person name="Marziali A."/>
            <person name="Militscher J."/>
            <person name="Miranda M."/>
            <person name="Nguyen M."/>
            <person name="Nierman W.C."/>
            <person name="Osborne B.I."/>
            <person name="Pai G."/>
            <person name="Peterson J."/>
            <person name="Pham P.K."/>
            <person name="Rizzo M."/>
            <person name="Rooney T."/>
            <person name="Rowley D."/>
            <person name="Sakano H."/>
            <person name="Salzberg S.L."/>
            <person name="Schwartz J.R."/>
            <person name="Shinn P."/>
            <person name="Southwick A.M."/>
            <person name="Sun H."/>
            <person name="Tallon L.J."/>
            <person name="Tambunga G."/>
            <person name="Toriumi M.J."/>
            <person name="Town C.D."/>
            <person name="Utterback T."/>
            <person name="Van Aken S."/>
            <person name="Vaysberg M."/>
            <person name="Vysotskaia V.S."/>
            <person name="Walker M."/>
            <person name="Wu D."/>
            <person name="Yu G."/>
            <person name="Fraser C.M."/>
            <person name="Venter J.C."/>
            <person name="Davis R.W."/>
        </authorList>
    </citation>
    <scope>NUCLEOTIDE SEQUENCE [LARGE SCALE GENOMIC DNA]</scope>
    <source>
        <strain>cv. Columbia</strain>
    </source>
</reference>
<reference key="2">
    <citation type="journal article" date="2017" name="Plant J.">
        <title>Araport11: a complete reannotation of the Arabidopsis thaliana reference genome.</title>
        <authorList>
            <person name="Cheng C.Y."/>
            <person name="Krishnakumar V."/>
            <person name="Chan A.P."/>
            <person name="Thibaud-Nissen F."/>
            <person name="Schobel S."/>
            <person name="Town C.D."/>
        </authorList>
    </citation>
    <scope>GENOME REANNOTATION</scope>
    <source>
        <strain>cv. Columbia</strain>
    </source>
</reference>
<reference key="3">
    <citation type="journal article" date="2002" name="Science">
        <title>Functional annotation of a full-length Arabidopsis cDNA collection.</title>
        <authorList>
            <person name="Seki M."/>
            <person name="Narusaka M."/>
            <person name="Kamiya A."/>
            <person name="Ishida J."/>
            <person name="Satou M."/>
            <person name="Sakurai T."/>
            <person name="Nakajima M."/>
            <person name="Enju A."/>
            <person name="Akiyama K."/>
            <person name="Oono Y."/>
            <person name="Muramatsu M."/>
            <person name="Hayashizaki Y."/>
            <person name="Kawai J."/>
            <person name="Carninci P."/>
            <person name="Itoh M."/>
            <person name="Ishii Y."/>
            <person name="Arakawa T."/>
            <person name="Shibata K."/>
            <person name="Shinagawa A."/>
            <person name="Shinozaki K."/>
        </authorList>
    </citation>
    <scope>NUCLEOTIDE SEQUENCE [LARGE SCALE MRNA]</scope>
    <source>
        <strain>cv. Columbia</strain>
    </source>
</reference>
<reference key="4">
    <citation type="journal article" date="2003" name="Science">
        <title>Empirical analysis of transcriptional activity in the Arabidopsis genome.</title>
        <authorList>
            <person name="Yamada K."/>
            <person name="Lim J."/>
            <person name="Dale J.M."/>
            <person name="Chen H."/>
            <person name="Shinn P."/>
            <person name="Palm C.J."/>
            <person name="Southwick A.M."/>
            <person name="Wu H.C."/>
            <person name="Kim C.J."/>
            <person name="Nguyen M."/>
            <person name="Pham P.K."/>
            <person name="Cheuk R.F."/>
            <person name="Karlin-Newmann G."/>
            <person name="Liu S.X."/>
            <person name="Lam B."/>
            <person name="Sakano H."/>
            <person name="Wu T."/>
            <person name="Yu G."/>
            <person name="Miranda M."/>
            <person name="Quach H.L."/>
            <person name="Tripp M."/>
            <person name="Chang C.H."/>
            <person name="Lee J.M."/>
            <person name="Toriumi M.J."/>
            <person name="Chan M.M."/>
            <person name="Tang C.C."/>
            <person name="Onodera C.S."/>
            <person name="Deng J.M."/>
            <person name="Akiyama K."/>
            <person name="Ansari Y."/>
            <person name="Arakawa T."/>
            <person name="Banh J."/>
            <person name="Banno F."/>
            <person name="Bowser L."/>
            <person name="Brooks S.Y."/>
            <person name="Carninci P."/>
            <person name="Chao Q."/>
            <person name="Choy N."/>
            <person name="Enju A."/>
            <person name="Goldsmith A.D."/>
            <person name="Gurjal M."/>
            <person name="Hansen N.F."/>
            <person name="Hayashizaki Y."/>
            <person name="Johnson-Hopson C."/>
            <person name="Hsuan V.W."/>
            <person name="Iida K."/>
            <person name="Karnes M."/>
            <person name="Khan S."/>
            <person name="Koesema E."/>
            <person name="Ishida J."/>
            <person name="Jiang P.X."/>
            <person name="Jones T."/>
            <person name="Kawai J."/>
            <person name="Kamiya A."/>
            <person name="Meyers C."/>
            <person name="Nakajima M."/>
            <person name="Narusaka M."/>
            <person name="Seki M."/>
            <person name="Sakurai T."/>
            <person name="Satou M."/>
            <person name="Tamse R."/>
            <person name="Vaysberg M."/>
            <person name="Wallender E.K."/>
            <person name="Wong C."/>
            <person name="Yamamura Y."/>
            <person name="Yuan S."/>
            <person name="Shinozaki K."/>
            <person name="Davis R.W."/>
            <person name="Theologis A."/>
            <person name="Ecker J.R."/>
        </authorList>
    </citation>
    <scope>NUCLEOTIDE SEQUENCE [LARGE SCALE MRNA]</scope>
    <source>
        <strain>cv. Columbia</strain>
    </source>
</reference>
<reference key="5">
    <citation type="journal article" date="2009" name="Curr. Biol.">
        <title>Plant-specific protein MCD1 determines the site of chloroplast division in concert with bacteria-derived MinD.</title>
        <authorList>
            <person name="Nakanishi H."/>
            <person name="Suzuki K."/>
            <person name="Kabeya Y."/>
            <person name="Miyagishima S.Y."/>
        </authorList>
    </citation>
    <scope>FUNCTION</scope>
    <scope>INTERACTION WITH MIND1</scope>
    <scope>SUBCELLULAR LOCATION</scope>
    <scope>TOPOLOGY</scope>
    <scope>DISRUPTION PHENOTYPE</scope>
</reference>
<reference key="6">
    <citation type="journal article" date="2013" name="PLoS ONE">
        <title>The chloroplast min system functions differentially in two specific nongreen plastids in Arabidopsis thaliana.</title>
        <authorList>
            <person name="Wang P."/>
            <person name="Zhang J."/>
            <person name="Su J."/>
            <person name="Wang P."/>
            <person name="Liu J."/>
            <person name="Liu B."/>
            <person name="Feng D."/>
            <person name="Wang J."/>
            <person name="Wang H."/>
        </authorList>
    </citation>
    <scope>FUNCTION</scope>
    <scope>DISRUPTION PHENOTYPE</scope>
    <source>
        <strain>cv. Columbia</strain>
        <strain>cv. Landsberg erecta</strain>
    </source>
</reference>
<reference key="7">
    <citation type="journal article" date="2018" name="Plant Cell">
        <title>MCD1 associates with FtsZ filaments via the membrane-tethering protein ARC6 to guide chloroplast division.</title>
        <authorList>
            <person name="Chen L."/>
            <person name="Sun B."/>
            <person name="Gao W."/>
            <person name="Zhang Q.Y."/>
            <person name="Yuan H."/>
            <person name="Zhang M."/>
        </authorList>
    </citation>
    <scope>FUNCTION</scope>
    <scope>DISRUPTION PHENOTYPE</scope>
    <scope>TOPOLOGY</scope>
    <scope>INTERACTION WITH ARC6 AND FTSZ2-1</scope>
    <scope>SUBCELLULAR LOCATION</scope>
    <source>
        <strain>cv. Columbia</strain>
    </source>
</reference>
<name>MCD1_ARATH</name>
<keyword id="KW-0150">Chloroplast</keyword>
<keyword id="KW-0472">Membrane</keyword>
<keyword id="KW-0934">Plastid</keyword>
<keyword id="KW-1001">Plastid inner membrane</keyword>
<keyword id="KW-1185">Reference proteome</keyword>
<keyword id="KW-0809">Transit peptide</keyword>
<keyword id="KW-0812">Transmembrane</keyword>
<keyword id="KW-1133">Transmembrane helix</keyword>